<evidence type="ECO:0000250" key="1">
    <source>
        <dbReference type="UniProtKB" id="Q8KLK7"/>
    </source>
</evidence>
<evidence type="ECO:0000269" key="2">
    <source>
    </source>
</evidence>
<evidence type="ECO:0000303" key="3">
    <source>
    </source>
</evidence>
<evidence type="ECO:0000305" key="4"/>
<feature type="chain" id="PRO_0000435522" description="(3,5-dihydroxyphenyl)acetyl-CoA 1,2-dioxygenase">
    <location>
        <begin position="1"/>
        <end position="434"/>
    </location>
</feature>
<feature type="binding site" evidence="1">
    <location>
        <position position="184"/>
    </location>
    <ligand>
        <name>substrate</name>
    </ligand>
</feature>
<feature type="binding site" evidence="1">
    <location>
        <position position="190"/>
    </location>
    <ligand>
        <name>substrate</name>
    </ligand>
</feature>
<feature type="binding site" evidence="1">
    <location>
        <begin position="223"/>
        <end position="226"/>
    </location>
    <ligand>
        <name>substrate</name>
    </ligand>
</feature>
<feature type="binding site" evidence="1">
    <location>
        <begin position="234"/>
        <end position="239"/>
    </location>
    <ligand>
        <name>substrate</name>
    </ligand>
</feature>
<feature type="binding site" evidence="1">
    <location>
        <position position="293"/>
    </location>
    <ligand>
        <name>substrate</name>
    </ligand>
</feature>
<feature type="binding site" evidence="1">
    <location>
        <begin position="322"/>
        <end position="324"/>
    </location>
    <ligand>
        <name>substrate</name>
    </ligand>
</feature>
<feature type="binding site" evidence="1">
    <location>
        <position position="413"/>
    </location>
    <ligand>
        <name>substrate</name>
    </ligand>
</feature>
<reference key="1">
    <citation type="submission" date="2011-09" db="EMBL/GenBank/DDBJ databases">
        <title>The vancomycin biosynthetic gene cluster.</title>
        <authorList>
            <person name="Woertz T."/>
            <person name="Dietz S."/>
            <person name="Zerbe K."/>
            <person name="Robinson J.A."/>
        </authorList>
    </citation>
    <scope>NUCLEOTIDE SEQUENCE [GENOMIC DNA]</scope>
    <source>
        <strain>ATCC19795</strain>
    </source>
</reference>
<reference key="2">
    <citation type="journal article" date="2001" name="Proc. Natl. Acad. Sci. U.S.A.">
        <title>Glycopeptide antibiotic biosynthesis: enzymatic assembly of the dedicated amino acid monomer (S)-3,5-dihydroxyphenylglycine.</title>
        <authorList>
            <person name="Chen H."/>
            <person name="Tseng C.C."/>
            <person name="Hubbard B.K."/>
            <person name="Walsh C.T."/>
        </authorList>
    </citation>
    <scope>FUNCTION</scope>
    <scope>CATALYTIC ACTIVITY</scope>
    <scope>BIOPHYSICOCHEMICAL PROPERTIES</scope>
    <scope>SUBSTRATE SPECIFICITY</scope>
    <source>
        <strain>NRRL18098</strain>
    </source>
</reference>
<dbReference type="EC" id="1.13.11.80" evidence="2"/>
<dbReference type="EMBL" id="HE589771">
    <property type="protein sequence ID" value="CCD33161.1"/>
    <property type="molecule type" value="Genomic_DNA"/>
</dbReference>
<dbReference type="SMR" id="G4V4T6"/>
<dbReference type="STRING" id="31958.SD37_33600"/>
<dbReference type="eggNOG" id="COG1024">
    <property type="taxonomic scope" value="Bacteria"/>
</dbReference>
<dbReference type="BRENDA" id="1.13.11.80">
    <property type="organism ID" value="315"/>
</dbReference>
<dbReference type="GO" id="GO:0016702">
    <property type="term" value="F:oxidoreductase activity, acting on single donors with incorporation of molecular oxygen, incorporation of two atoms of oxygen"/>
    <property type="evidence" value="ECO:0000314"/>
    <property type="project" value="UniProtKB"/>
</dbReference>
<dbReference type="GO" id="GO:0017000">
    <property type="term" value="P:antibiotic biosynthetic process"/>
    <property type="evidence" value="ECO:0007669"/>
    <property type="project" value="UniProtKB-KW"/>
</dbReference>
<dbReference type="GO" id="GO:0006635">
    <property type="term" value="P:fatty acid beta-oxidation"/>
    <property type="evidence" value="ECO:0007669"/>
    <property type="project" value="TreeGrafter"/>
</dbReference>
<dbReference type="CDD" id="cd06558">
    <property type="entry name" value="crotonase-like"/>
    <property type="match status" value="1"/>
</dbReference>
<dbReference type="Gene3D" id="1.20.58.1300">
    <property type="match status" value="1"/>
</dbReference>
<dbReference type="Gene3D" id="3.90.226.10">
    <property type="entry name" value="2-enoyl-CoA Hydratase, Chain A, domain 1"/>
    <property type="match status" value="1"/>
</dbReference>
<dbReference type="InterPro" id="IPR029045">
    <property type="entry name" value="ClpP/crotonase-like_dom_sf"/>
</dbReference>
<dbReference type="InterPro" id="IPR053482">
    <property type="entry name" value="DPA-CoA_Dioxygenase"/>
</dbReference>
<dbReference type="InterPro" id="IPR001753">
    <property type="entry name" value="Enoyl-CoA_hydra/iso"/>
</dbReference>
<dbReference type="NCBIfam" id="NF042432">
    <property type="entry name" value="DHPACoAdixog_DpgC"/>
    <property type="match status" value="1"/>
</dbReference>
<dbReference type="PANTHER" id="PTHR11941:SF54">
    <property type="entry name" value="ENOYL-COA HYDRATASE, MITOCHONDRIAL"/>
    <property type="match status" value="1"/>
</dbReference>
<dbReference type="PANTHER" id="PTHR11941">
    <property type="entry name" value="ENOYL-COA HYDRATASE-RELATED"/>
    <property type="match status" value="1"/>
</dbReference>
<dbReference type="Pfam" id="PF00378">
    <property type="entry name" value="ECH_1"/>
    <property type="match status" value="1"/>
</dbReference>
<dbReference type="SUPFAM" id="SSF52096">
    <property type="entry name" value="ClpP/crotonase"/>
    <property type="match status" value="1"/>
</dbReference>
<protein>
    <recommendedName>
        <fullName evidence="3">(3,5-dihydroxyphenyl)acetyl-CoA 1,2-dioxygenase</fullName>
        <ecNumber evidence="2">1.13.11.80</ecNumber>
    </recommendedName>
</protein>
<organism>
    <name type="scientific">Amycolatopsis orientalis</name>
    <name type="common">Nocardia orientalis</name>
    <dbReference type="NCBI Taxonomy" id="31958"/>
    <lineage>
        <taxon>Bacteria</taxon>
        <taxon>Bacillati</taxon>
        <taxon>Actinomycetota</taxon>
        <taxon>Actinomycetes</taxon>
        <taxon>Pseudonocardiales</taxon>
        <taxon>Pseudonocardiaceae</taxon>
        <taxon>Amycolatopsis</taxon>
    </lineage>
</organism>
<comment type="function">
    <text evidence="2">Involved in the biosynthesis of the nonproteinogenic amino acid monomer (S)-3,5-dihydroxyphenylglycine (Dpg) responsible of the production of vancomycin and teicoplanin antibiotics. Catalyzes the unusual conversion 3,5-dihydroxyphenylacetyl-CoA (DPA-CoA) to 3,5-dihydroxyphenylglyoxylate. DpgC performed a net four-electron oxidation of the benzylic carbon of DPA-CoA and the hydrolysis of the thioester bond to generate free CoA. It can also use phenylacetyl-CoA (PA-CoA) as substrate.</text>
</comment>
<comment type="catalytic activity">
    <reaction evidence="2">
        <text>(3,5-dihydroxyphenyl)acetyl-CoA + O2 = 2-(3,5-dihydroxyphenyl)-2-oxoacetate + CoA + H(+)</text>
        <dbReference type="Rhea" id="RHEA:44632"/>
        <dbReference type="ChEBI" id="CHEBI:15378"/>
        <dbReference type="ChEBI" id="CHEBI:15379"/>
        <dbReference type="ChEBI" id="CHEBI:57287"/>
        <dbReference type="ChEBI" id="CHEBI:75210"/>
        <dbReference type="ChEBI" id="CHEBI:84554"/>
        <dbReference type="EC" id="1.13.11.80"/>
    </reaction>
</comment>
<comment type="biophysicochemical properties">
    <kinetics>
        <KM evidence="2">6 uM for DPA-CoA</KM>
        <KM evidence="2">300 uM for PA-CoA</KM>
        <text evidence="2">kcat is 10 min(-1) for dioxygenase activity.</text>
    </kinetics>
</comment>
<comment type="subunit">
    <text evidence="1">Homohexamer; dimer of trimers.</text>
</comment>
<comment type="similarity">
    <text evidence="4">Belongs to the enoyl-CoA hydratase/isomerase family.</text>
</comment>
<sequence>MTTDSPTLSLSPGLDHRALAKAAQRVDELLDGLPSPSARTPAQREAASSALDEIRAARTEYVEAHAEEIYDRLTDGRTRYLRLDELVRAAASAYPGLVPTEAQMAAERSRRQAEKEGREIDQGIFLRGILSAPKAGPHLLDAMLRPTARALELLPEFVETGVVRMEAASLERRDGVAYLTLCRDDCLNAEDAQQVDDMETAVDLALLDPAVRVGMLRGGVMSHPRYAGRRVFCAGINLKKLSSGDIPLVDFLLRRELGYIHKIVRGVATDGSWRARVIDKPWLAAVDSFAIGGGAQLLLVFDHVVAASDAYFSLPAATEGIIPGAANYRLSRFTGPRLARQVILGGRRITADEPDARLLVDQVVPPEEMDAAIESALAALDGDAVRANRRMVNLAEEPPDGFRRYMAEFALQQALRIYGADVIGKVGGFAAGSR</sequence>
<accession>G4V4T6</accession>
<name>DPGC_AMYOR</name>
<proteinExistence type="evidence at protein level"/>
<gene>
    <name type="primary">dpgC</name>
</gene>
<keyword id="KW-0045">Antibiotic biosynthesis</keyword>
<keyword id="KW-0560">Oxidoreductase</keyword>